<organism>
    <name type="scientific">Aspergillus kawachii (strain NBRC 4308)</name>
    <name type="common">White koji mold</name>
    <name type="synonym">Aspergillus awamori var. kawachi</name>
    <dbReference type="NCBI Taxonomy" id="1033177"/>
    <lineage>
        <taxon>Eukaryota</taxon>
        <taxon>Fungi</taxon>
        <taxon>Dikarya</taxon>
        <taxon>Ascomycota</taxon>
        <taxon>Pezizomycotina</taxon>
        <taxon>Eurotiomycetes</taxon>
        <taxon>Eurotiomycetidae</taxon>
        <taxon>Eurotiales</taxon>
        <taxon>Aspergillaceae</taxon>
        <taxon>Aspergillus</taxon>
        <taxon>Aspergillus subgen. Circumdati</taxon>
    </lineage>
</organism>
<sequence>MFSRRNLLALGLAATVSAGPCDIYEAGDTPCVAAHSTTRALYSSFSGALYQLQRGSDDTTTTISPLTAGGIADASAQDTFCANTTCLITIIYDQSGNGNHLTQAPPGGFDGPDTDGYDNLASAIGAPVTLNGQKAYGVFMSPGTGYRNNEATGTATGDEAEGMYAVLDGTHYNDACCFDYGNAETSSTDTGAGHMEAIYLGNSTTWGYGAGDGPWIMVDMENNLFSGADEGYNSGDPSISYRFVTAAVKGGADKWAIRGANAASGSLSTYYSGARPDYSGYNPMSKEGAIILGIGGDNSNGAQGTFYEGVMTSGYPSDDTENSVQENIVAAKYVVGSLVSGPSFTSGEVVSLRVTTPGYTTRYIAHTDTTVNTQVVDDDSSTTLKEEASWTVVTGLANSQCFSFESVDTPGSYIRHYNFELLLNANDGTKQFHEDATFCPQAALNGEGTSLRSWSYPTRYFRHYENVLYAASNGGVQTFDSKTSFNNDVSFEIETAFAS</sequence>
<evidence type="ECO:0000250" key="1"/>
<evidence type="ECO:0000255" key="2"/>
<evidence type="ECO:0000269" key="3">
    <source>
    </source>
</evidence>
<evidence type="ECO:0000269" key="4">
    <source>
    </source>
</evidence>
<evidence type="ECO:0000269" key="5">
    <source>
    </source>
</evidence>
<evidence type="ECO:0000305" key="6"/>
<evidence type="ECO:0007829" key="7">
    <source>
        <dbReference type="PDB" id="1WD3"/>
    </source>
</evidence>
<evidence type="ECO:0007829" key="8">
    <source>
        <dbReference type="PDB" id="2D43"/>
    </source>
</evidence>
<evidence type="ECO:0007829" key="9">
    <source>
        <dbReference type="PDB" id="2D44"/>
    </source>
</evidence>
<evidence type="ECO:0007829" key="10">
    <source>
        <dbReference type="PDB" id="6SXR"/>
    </source>
</evidence>
<evidence type="ECO:0007829" key="11">
    <source>
        <dbReference type="PDB" id="6SXT"/>
    </source>
</evidence>
<keyword id="KW-0002">3D-structure</keyword>
<keyword id="KW-0119">Carbohydrate metabolism</keyword>
<keyword id="KW-0903">Direct protein sequencing</keyword>
<keyword id="KW-1015">Disulfide bond</keyword>
<keyword id="KW-0325">Glycoprotein</keyword>
<keyword id="KW-0326">Glycosidase</keyword>
<keyword id="KW-0378">Hydrolase</keyword>
<keyword id="KW-0624">Polysaccharide degradation</keyword>
<keyword id="KW-0964">Secreted</keyword>
<keyword id="KW-0732">Signal</keyword>
<keyword id="KW-0858">Xylan degradation</keyword>
<name>ABFB_ASPKW</name>
<accession>Q8NK89</accession>
<accession>G7XUM7</accession>
<comment type="function">
    <text evidence="3 4">Alpha-L-arabinofuranosidase involved in the degradation of arabinoxylan, a major component of plant hemicellulose. Able to hydrolyze 1,5-, 1,3- and 1,2-alpha-linkages not only in L-arabinofuranosyl oligosaccharides, but also in polysaccharides containing terminal non-reducing L-arabinofuranoses in side chains, like L-arabinan, arabinogalactan and arabinoxylan.</text>
</comment>
<comment type="catalytic activity">
    <reaction>
        <text>Hydrolysis of terminal non-reducing alpha-L-arabinofuranoside residues in alpha-L-arabinosides.</text>
        <dbReference type="EC" id="3.2.1.55"/>
    </reaction>
</comment>
<comment type="biophysicochemical properties">
    <kinetics>
        <KM evidence="3 4">0.76 mM for L-arabinofuranose</KM>
    </kinetics>
    <phDependence>
        <text evidence="3 4">Optimum pH is 4.0. Stable between pH 3.0 and 7.0.</text>
    </phDependence>
    <temperatureDependence>
        <text evidence="3 4">Optimum temperature is 55 degrees Celsius.</text>
    </temperatureDependence>
</comment>
<comment type="pathway">
    <text>Glycan metabolism; L-arabinan degradation.</text>
</comment>
<comment type="subcellular location">
    <subcellularLocation>
        <location evidence="1">Secreted</location>
    </subcellularLocation>
</comment>
<comment type="induction">
    <text evidence="4">Expressed in the presence of L-arabitol and L-arabinose, and repressed in the presence of sucrose and glucose.</text>
</comment>
<comment type="domain">
    <text evidence="3">Organized into two domains: an N-terminal catalytic domain and a C-terminal arabinose-binding domain (ABD).</text>
</comment>
<comment type="biotechnology">
    <text evidence="4">Contribute to an increase in cereal utilization and formation of aroma in shochu brewing.</text>
</comment>
<comment type="similarity">
    <text evidence="6">Belongs to the glycosyl hydrolase 54 family.</text>
</comment>
<reference key="1">
    <citation type="journal article" date="2003" name="J. Biosci. Bioeng.">
        <title>Role of two alpha-L-arabinofuranosidases in arabinoxylan degradation and characteristics of the encoding genes from shochu koji molds, Aspergillus kawachii and Aspergillus awamori.</title>
        <authorList>
            <person name="Koseki T."/>
            <person name="Okuda M."/>
            <person name="Sudoh S."/>
            <person name="Kizaki Y."/>
            <person name="Iwano K."/>
            <person name="Aramaki I."/>
            <person name="Matsuzawa H."/>
        </authorList>
    </citation>
    <scope>NUCLEOTIDE SEQUENCE [GENOMIC DNA]</scope>
    <scope>PROTEIN SEQUENCE OF 18-27 AND 421-432</scope>
    <scope>SUBCELLULAR LOCATION</scope>
    <scope>INDUCTION</scope>
    <scope>FUNCTION</scope>
    <scope>BIOPHYSICOCHEMICAL PROPERTIES</scope>
    <scope>BIOTECHNOLOGY</scope>
    <source>
        <strain>NBRC 4308</strain>
    </source>
</reference>
<reference key="2">
    <citation type="journal article" date="2011" name="Eukaryot. Cell">
        <title>Genome sequence of the white koji mold Aspergillus kawachii IFO 4308, used for brewing the Japanese distilled spirit shochu.</title>
        <authorList>
            <person name="Futagami T."/>
            <person name="Mori K."/>
            <person name="Yamashita A."/>
            <person name="Wada S."/>
            <person name="Kajiwara Y."/>
            <person name="Takashita H."/>
            <person name="Omori T."/>
            <person name="Takegawa K."/>
            <person name="Tashiro K."/>
            <person name="Kuhara S."/>
            <person name="Goto M."/>
        </authorList>
    </citation>
    <scope>NUCLEOTIDE SEQUENCE [LARGE SCALE GENOMIC DNA]</scope>
    <source>
        <strain>NBRC 4308</strain>
    </source>
</reference>
<reference key="3">
    <citation type="journal article" date="2004" name="J. Biol. Chem.">
        <title>Crystal structure of a family 54 alpha-L-arabinofuranosidase reveals a novel carbohydrate-binding module that can bind arabinose.</title>
        <authorList>
            <person name="Miyanaga A."/>
            <person name="Koseki T."/>
            <person name="Matsuzawa H."/>
            <person name="Wakagi T."/>
            <person name="Shoun H."/>
            <person name="Fushinobu S."/>
        </authorList>
    </citation>
    <scope>X-RAY CRYSTALLOGRAPHY (1.75 ANGSTROMS) OF 19-499 IN COMPLEX WITH SUBSTRATE</scope>
    <scope>DOMAIN</scope>
    <scope>ACTIVE SITE</scope>
    <scope>DISULFIDE BONDS</scope>
    <scope>FUNCTION</scope>
    <scope>BIOPHYSICOCHEMICAL PROPERTIES</scope>
    <scope>GLYCOSYLATION AT ASN-202</scope>
    <scope>MUTAGENESIS OF 176-CYS-CYS-177; THR-204; GLU-221 AND ASP-297</scope>
    <source>
        <strain>NBRC 4308</strain>
    </source>
</reference>
<reference key="4">
    <citation type="journal article" date="2006" name="Biochem. J.">
        <title>The family 42 carbohydrate-binding module of family 54 alpha-L-arabinofuranosidase specifically binds the arabinofuranose side chain of hemicellulose.</title>
        <authorList>
            <person name="Miyanaga A."/>
            <person name="Koseki T."/>
            <person name="Miwa Y."/>
            <person name="Mese Y."/>
            <person name="Nakamura S."/>
            <person name="Kuno A."/>
            <person name="Hirabayashi J."/>
            <person name="Matsuzawa H."/>
            <person name="Wakagi T."/>
            <person name="Shoun H."/>
            <person name="Fushinobu S."/>
        </authorList>
    </citation>
    <scope>X-RAY CRYSTALLOGRAPHY (2.8 ANGSTROMS) OF 19-499 OF THE ALA-221 MUTANT IN COMPLEX WITH SUBSTRATE</scope>
    <source>
        <strain>NBRC 4308</strain>
    </source>
</reference>
<gene>
    <name type="primary">abfB</name>
    <name type="ORF">AKAW_08685</name>
</gene>
<protein>
    <recommendedName>
        <fullName>Alpha-L-arabinofuranosidase B</fullName>
        <shortName>ABF B</shortName>
        <shortName>Arabinosidase B</shortName>
        <ecNumber>3.2.1.55</ecNumber>
    </recommendedName>
</protein>
<feature type="signal peptide" evidence="2">
    <location>
        <begin position="1"/>
        <end position="17"/>
    </location>
</feature>
<feature type="chain" id="PRO_0000394606" description="Alpha-L-arabinofuranosidase B">
    <location>
        <begin position="18"/>
        <end position="499"/>
    </location>
</feature>
<feature type="region of interest" description="Catalytic">
    <location>
        <begin position="18"/>
        <end position="335"/>
    </location>
</feature>
<feature type="region of interest" description="ABD">
    <location>
        <begin position="336"/>
        <end position="499"/>
    </location>
</feature>
<feature type="active site" description="Nucleophile" evidence="3">
    <location>
        <position position="221"/>
    </location>
</feature>
<feature type="active site" description="Proton donor" evidence="3">
    <location>
        <position position="297"/>
    </location>
</feature>
<feature type="binding site" evidence="3 5">
    <location>
        <position position="219"/>
    </location>
    <ligand>
        <name>substrate</name>
    </ligand>
</feature>
<feature type="binding site" evidence="3 5">
    <location>
        <position position="222"/>
    </location>
    <ligand>
        <name>substrate</name>
    </ligand>
</feature>
<feature type="binding site" evidence="3 5">
    <location>
        <position position="223"/>
    </location>
    <ligand>
        <name>substrate</name>
    </ligand>
</feature>
<feature type="binding site" evidence="3 5">
    <location>
        <position position="296"/>
    </location>
    <ligand>
        <name>substrate</name>
    </ligand>
</feature>
<feature type="binding site" evidence="3 5">
    <location>
        <position position="416"/>
    </location>
    <ligand>
        <name>substrate</name>
    </ligand>
</feature>
<feature type="binding site" evidence="3 5">
    <location>
        <position position="418"/>
    </location>
    <ligand>
        <name>substrate</name>
    </ligand>
</feature>
<feature type="binding site" evidence="3 5">
    <location>
        <position position="419"/>
    </location>
    <ligand>
        <name>substrate</name>
    </ligand>
</feature>
<feature type="binding site" evidence="3 5">
    <location>
        <position position="435"/>
    </location>
    <ligand>
        <name>substrate</name>
    </ligand>
</feature>
<feature type="binding site" evidence="3 5">
    <location>
        <position position="463"/>
    </location>
    <ligand>
        <name>substrate</name>
    </ligand>
</feature>
<feature type="binding site" evidence="3 5">
    <location>
        <position position="465"/>
    </location>
    <ligand>
        <name>substrate</name>
    </ligand>
</feature>
<feature type="binding site" evidence="3 5">
    <location>
        <position position="468"/>
    </location>
    <ligand>
        <name>substrate</name>
    </ligand>
</feature>
<feature type="binding site" evidence="3 5">
    <location>
        <position position="488"/>
    </location>
    <ligand>
        <name>substrate</name>
    </ligand>
</feature>
<feature type="site" description="Cis-peptide bond" evidence="3">
    <location>
        <begin position="176"/>
        <end position="177"/>
    </location>
</feature>
<feature type="glycosylation site" description="N-linked (GlcNAc...) asparagine" evidence="2">
    <location>
        <position position="83"/>
    </location>
</feature>
<feature type="glycosylation site" description="N-linked (GlcNAc...) asparagine" evidence="3">
    <location>
        <position position="202"/>
    </location>
</feature>
<feature type="disulfide bond" evidence="3">
    <location>
        <begin position="21"/>
        <end position="31"/>
    </location>
</feature>
<feature type="disulfide bond" evidence="3">
    <location>
        <begin position="81"/>
        <end position="86"/>
    </location>
</feature>
<feature type="disulfide bond" evidence="3">
    <location>
        <begin position="176"/>
        <end position="177"/>
    </location>
</feature>
<feature type="disulfide bond" evidence="3">
    <location>
        <begin position="401"/>
        <end position="439"/>
    </location>
</feature>
<feature type="mutagenesis site" description="Decreases the affinity toward the substrate." evidence="3">
    <original>CC</original>
    <variation>AA</variation>
    <location>
        <begin position="176"/>
        <end position="177"/>
    </location>
</feature>
<feature type="mutagenesis site" description="Reduces thermostability and catalytic activity." evidence="3">
    <original>T</original>
    <variation>A</variation>
    <location>
        <position position="204"/>
    </location>
</feature>
<feature type="mutagenesis site" description="Impairs catalytic activity." evidence="3">
    <original>E</original>
    <variation>A</variation>
    <location>
        <position position="221"/>
    </location>
</feature>
<feature type="mutagenesis site" description="Impairs catalytic activity." evidence="3">
    <original>D</original>
    <variation>A</variation>
    <location>
        <position position="297"/>
    </location>
</feature>
<feature type="helix" evidence="11">
    <location>
        <begin position="20"/>
        <end position="26"/>
    </location>
</feature>
<feature type="strand" evidence="11">
    <location>
        <begin position="31"/>
        <end position="39"/>
    </location>
</feature>
<feature type="strand" evidence="11">
    <location>
        <begin position="50"/>
        <end position="54"/>
    </location>
</feature>
<feature type="turn" evidence="11">
    <location>
        <begin position="55"/>
        <end position="57"/>
    </location>
</feature>
<feature type="strand" evidence="11">
    <location>
        <begin position="60"/>
        <end position="63"/>
    </location>
</feature>
<feature type="strand" evidence="11">
    <location>
        <begin position="65"/>
        <end position="67"/>
    </location>
</feature>
<feature type="helix" evidence="11">
    <location>
        <begin position="74"/>
        <end position="80"/>
    </location>
</feature>
<feature type="turn" evidence="11">
    <location>
        <begin position="81"/>
        <end position="83"/>
    </location>
</feature>
<feature type="strand" evidence="11">
    <location>
        <begin position="86"/>
        <end position="91"/>
    </location>
</feature>
<feature type="turn" evidence="8">
    <location>
        <begin position="94"/>
        <end position="97"/>
    </location>
</feature>
<feature type="strand" evidence="11">
    <location>
        <begin position="101"/>
        <end position="103"/>
    </location>
</feature>
<feature type="strand" evidence="7">
    <location>
        <begin position="107"/>
        <end position="109"/>
    </location>
</feature>
<feature type="helix" evidence="11">
    <location>
        <begin position="114"/>
        <end position="116"/>
    </location>
</feature>
<feature type="strand" evidence="11">
    <location>
        <begin position="121"/>
        <end position="130"/>
    </location>
</feature>
<feature type="strand" evidence="11">
    <location>
        <begin position="133"/>
        <end position="140"/>
    </location>
</feature>
<feature type="strand" evidence="11">
    <location>
        <begin position="146"/>
        <end position="150"/>
    </location>
</feature>
<feature type="strand" evidence="11">
    <location>
        <begin position="161"/>
        <end position="168"/>
    </location>
</feature>
<feature type="strand" evidence="11">
    <location>
        <begin position="174"/>
        <end position="176"/>
    </location>
</feature>
<feature type="strand" evidence="11">
    <location>
        <begin position="179"/>
        <end position="183"/>
    </location>
</feature>
<feature type="strand" evidence="11">
    <location>
        <begin position="196"/>
        <end position="201"/>
    </location>
</feature>
<feature type="strand" evidence="9">
    <location>
        <begin position="210"/>
        <end position="212"/>
    </location>
</feature>
<feature type="strand" evidence="11">
    <location>
        <begin position="215"/>
        <end position="219"/>
    </location>
</feature>
<feature type="strand" evidence="11">
    <location>
        <begin position="224"/>
        <end position="232"/>
    </location>
</feature>
<feature type="strand" evidence="11">
    <location>
        <begin position="242"/>
        <end position="251"/>
    </location>
</feature>
<feature type="strand" evidence="11">
    <location>
        <begin position="254"/>
        <end position="261"/>
    </location>
</feature>
<feature type="strand" evidence="11">
    <location>
        <begin position="264"/>
        <end position="274"/>
    </location>
</feature>
<feature type="strand" evidence="10">
    <location>
        <begin position="281"/>
        <end position="283"/>
    </location>
</feature>
<feature type="strand" evidence="11">
    <location>
        <begin position="289"/>
        <end position="294"/>
    </location>
</feature>
<feature type="strand" evidence="11">
    <location>
        <begin position="304"/>
        <end position="314"/>
    </location>
</feature>
<feature type="helix" evidence="11">
    <location>
        <begin position="318"/>
        <end position="331"/>
    </location>
</feature>
<feature type="strand" evidence="11">
    <location>
        <begin position="333"/>
        <end position="335"/>
    </location>
</feature>
<feature type="strand" evidence="11">
    <location>
        <begin position="349"/>
        <end position="354"/>
    </location>
</feature>
<feature type="strand" evidence="11">
    <location>
        <begin position="362"/>
        <end position="367"/>
    </location>
</feature>
<feature type="strand" evidence="11">
    <location>
        <begin position="370"/>
        <end position="375"/>
    </location>
</feature>
<feature type="helix" evidence="11">
    <location>
        <begin position="382"/>
        <end position="387"/>
    </location>
</feature>
<feature type="strand" evidence="11">
    <location>
        <begin position="390"/>
        <end position="394"/>
    </location>
</feature>
<feature type="strand" evidence="11">
    <location>
        <begin position="401"/>
        <end position="409"/>
    </location>
</feature>
<feature type="strand" evidence="11">
    <location>
        <begin position="412"/>
        <end position="417"/>
    </location>
</feature>
<feature type="strand" evidence="11">
    <location>
        <begin position="420"/>
        <end position="425"/>
    </location>
</feature>
<feature type="helix" evidence="11">
    <location>
        <begin position="430"/>
        <end position="435"/>
    </location>
</feature>
<feature type="strand" evidence="11">
    <location>
        <begin position="438"/>
        <end position="442"/>
    </location>
</feature>
<feature type="strand" evidence="11">
    <location>
        <begin position="446"/>
        <end position="456"/>
    </location>
</feature>
<feature type="strand" evidence="11">
    <location>
        <begin position="460"/>
        <end position="464"/>
    </location>
</feature>
<feature type="strand" evidence="11">
    <location>
        <begin position="467"/>
        <end position="471"/>
    </location>
</feature>
<feature type="helix" evidence="11">
    <location>
        <begin position="478"/>
        <end position="480"/>
    </location>
</feature>
<feature type="helix" evidence="11">
    <location>
        <begin position="485"/>
        <end position="488"/>
    </location>
</feature>
<feature type="strand" evidence="11">
    <location>
        <begin position="491"/>
        <end position="495"/>
    </location>
</feature>
<proteinExistence type="evidence at protein level"/>
<dbReference type="EC" id="3.2.1.55"/>
<dbReference type="EMBL" id="AB085904">
    <property type="protein sequence ID" value="BAB96816.1"/>
    <property type="molecule type" value="Genomic_DNA"/>
</dbReference>
<dbReference type="EMBL" id="DF126474">
    <property type="protein sequence ID" value="GAA90571.1"/>
    <property type="molecule type" value="Genomic_DNA"/>
</dbReference>
<dbReference type="PDB" id="1WD3">
    <property type="method" value="X-ray"/>
    <property type="resolution" value="1.75 A"/>
    <property type="chains" value="A=19-499"/>
</dbReference>
<dbReference type="PDB" id="1WD4">
    <property type="method" value="X-ray"/>
    <property type="resolution" value="2.07 A"/>
    <property type="chains" value="A=19-499"/>
</dbReference>
<dbReference type="PDB" id="2D43">
    <property type="method" value="X-ray"/>
    <property type="resolution" value="2.80 A"/>
    <property type="chains" value="A=19-499"/>
</dbReference>
<dbReference type="PDB" id="2D44">
    <property type="method" value="X-ray"/>
    <property type="resolution" value="2.30 A"/>
    <property type="chains" value="A=19-499"/>
</dbReference>
<dbReference type="PDB" id="6SXR">
    <property type="method" value="X-ray"/>
    <property type="resolution" value="1.64 A"/>
    <property type="chains" value="A=19-499"/>
</dbReference>
<dbReference type="PDB" id="6SXS">
    <property type="method" value="X-ray"/>
    <property type="resolution" value="1.86 A"/>
    <property type="chains" value="AAA=19-499"/>
</dbReference>
<dbReference type="PDB" id="6SXT">
    <property type="method" value="X-ray"/>
    <property type="resolution" value="1.47 A"/>
    <property type="chains" value="A=19-499"/>
</dbReference>
<dbReference type="PDBsum" id="1WD3"/>
<dbReference type="PDBsum" id="1WD4"/>
<dbReference type="PDBsum" id="2D43"/>
<dbReference type="PDBsum" id="2D44"/>
<dbReference type="PDBsum" id="6SXR"/>
<dbReference type="PDBsum" id="6SXS"/>
<dbReference type="PDBsum" id="6SXT"/>
<dbReference type="SMR" id="Q8NK89"/>
<dbReference type="STRING" id="1033177.Q8NK89"/>
<dbReference type="CAZy" id="CBM42">
    <property type="family name" value="Carbohydrate-Binding Module Family 42"/>
</dbReference>
<dbReference type="CAZy" id="GH54">
    <property type="family name" value="Glycoside Hydrolase Family 54"/>
</dbReference>
<dbReference type="GlyCosmos" id="Q8NK89">
    <property type="glycosylation" value="2 sites, No reported glycans"/>
</dbReference>
<dbReference type="iPTMnet" id="Q8NK89"/>
<dbReference type="VEuPathDB" id="FungiDB:AKAW_08685"/>
<dbReference type="eggNOG" id="ENOG502QS3Q">
    <property type="taxonomic scope" value="Eukaryota"/>
</dbReference>
<dbReference type="InParanoid" id="Q8NK89"/>
<dbReference type="OrthoDB" id="93406at5052"/>
<dbReference type="BRENDA" id="3.2.1.55">
    <property type="organism ID" value="514"/>
</dbReference>
<dbReference type="SABIO-RK" id="Q8NK89"/>
<dbReference type="UniPathway" id="UPA00667"/>
<dbReference type="EvolutionaryTrace" id="Q8NK89"/>
<dbReference type="GO" id="GO:0005576">
    <property type="term" value="C:extracellular region"/>
    <property type="evidence" value="ECO:0000314"/>
    <property type="project" value="UniProtKB"/>
</dbReference>
<dbReference type="GO" id="GO:0046556">
    <property type="term" value="F:alpha-L-arabinofuranosidase activity"/>
    <property type="evidence" value="ECO:0000314"/>
    <property type="project" value="UniProtKB"/>
</dbReference>
<dbReference type="GO" id="GO:0031222">
    <property type="term" value="P:arabinan catabolic process"/>
    <property type="evidence" value="ECO:0007669"/>
    <property type="project" value="UniProtKB-UniPathway"/>
</dbReference>
<dbReference type="GO" id="GO:0019566">
    <property type="term" value="P:arabinose metabolic process"/>
    <property type="evidence" value="ECO:0000314"/>
    <property type="project" value="UniProtKB"/>
</dbReference>
<dbReference type="GO" id="GO:0046373">
    <property type="term" value="P:L-arabinose metabolic process"/>
    <property type="evidence" value="ECO:0007669"/>
    <property type="project" value="InterPro"/>
</dbReference>
<dbReference type="GO" id="GO:0045490">
    <property type="term" value="P:pectin catabolic process"/>
    <property type="evidence" value="ECO:0007669"/>
    <property type="project" value="TreeGrafter"/>
</dbReference>
<dbReference type="GO" id="GO:0045493">
    <property type="term" value="P:xylan catabolic process"/>
    <property type="evidence" value="ECO:0007669"/>
    <property type="project" value="UniProtKB-KW"/>
</dbReference>
<dbReference type="CDD" id="cd23399">
    <property type="entry name" value="beta-trefoil_ABD_ABFB"/>
    <property type="match status" value="1"/>
</dbReference>
<dbReference type="FunFam" id="2.60.120.200:FF:000131">
    <property type="entry name" value="Probable alpha-L-arabinofuranosidase B"/>
    <property type="match status" value="1"/>
</dbReference>
<dbReference type="FunFam" id="2.80.10.50:FF:000059">
    <property type="entry name" value="Probable alpha-L-arabinofuranosidase B"/>
    <property type="match status" value="1"/>
</dbReference>
<dbReference type="Gene3D" id="2.60.120.200">
    <property type="match status" value="1"/>
</dbReference>
<dbReference type="Gene3D" id="2.80.10.50">
    <property type="match status" value="1"/>
</dbReference>
<dbReference type="InterPro" id="IPR015289">
    <property type="entry name" value="A-L-arabinofuranosidase_B_cat"/>
</dbReference>
<dbReference type="InterPro" id="IPR038964">
    <property type="entry name" value="ABFB"/>
</dbReference>
<dbReference type="InterPro" id="IPR007934">
    <property type="entry name" value="AbfB_ABD"/>
</dbReference>
<dbReference type="InterPro" id="IPR036195">
    <property type="entry name" value="AbfB_ABD_sf"/>
</dbReference>
<dbReference type="InterPro" id="IPR013320">
    <property type="entry name" value="ConA-like_dom_sf"/>
</dbReference>
<dbReference type="PANTHER" id="PTHR39447">
    <property type="entry name" value="ALPHA-L-ARABINOFURANOSIDASE B"/>
    <property type="match status" value="1"/>
</dbReference>
<dbReference type="PANTHER" id="PTHR39447:SF2">
    <property type="entry name" value="ALPHA-L-ARABINOFURANOSIDASE B"/>
    <property type="match status" value="1"/>
</dbReference>
<dbReference type="Pfam" id="PF05270">
    <property type="entry name" value="AbfB"/>
    <property type="match status" value="1"/>
</dbReference>
<dbReference type="Pfam" id="PF09206">
    <property type="entry name" value="ArabFuran-catal"/>
    <property type="match status" value="1"/>
</dbReference>
<dbReference type="SUPFAM" id="SSF110221">
    <property type="entry name" value="AbfB domain"/>
    <property type="match status" value="1"/>
</dbReference>
<dbReference type="SUPFAM" id="SSF49899">
    <property type="entry name" value="Concanavalin A-like lectins/glucanases"/>
    <property type="match status" value="1"/>
</dbReference>